<organism>
    <name type="scientific">Mycobacterium tuberculosis (strain ATCC 25618 / H37Rv)</name>
    <dbReference type="NCBI Taxonomy" id="83332"/>
    <lineage>
        <taxon>Bacteria</taxon>
        <taxon>Bacillati</taxon>
        <taxon>Actinomycetota</taxon>
        <taxon>Actinomycetes</taxon>
        <taxon>Mycobacteriales</taxon>
        <taxon>Mycobacteriaceae</taxon>
        <taxon>Mycobacterium</taxon>
        <taxon>Mycobacterium tuberculosis complex</taxon>
    </lineage>
</organism>
<accession>P9WMF5</accession>
<accession>L0TB04</accession>
<accession>P67665</accession>
<accession>Q10872</accession>
<sequence>MVDPQLDGPQLAALAAVVELGSFDAAAERLHVTPSAVSQRIKSLEQQVGQVLVVREKPCRATTAGIPLLRLAAQTALLESEALAEMGGNASLKRTRITIAVNADSMATWFSAVFDGLGDVLLDVRIEDQDHSARLLREGVAMGAVTTERNPVPGCRVHPLGEMRYLPVASRPFVQRHLSDGFTAAAAAKAPSLAWNRDDGLQDMLVRKAFRRAITRPTHFVPTTEGFTAAARAGLGWGMFPEKLAASPLADGSFVRVCDIHLDVPLYWQCWKLDSPIIARITDTVRAAASGLYRGQQRRRRPG</sequence>
<gene>
    <name evidence="6" type="primary">lysG</name>
    <name evidence="5" type="synonym">argP</name>
    <name type="ordered locus">Rv1985c</name>
    <name type="ORF">MTCY39.34</name>
</gene>
<keyword id="KW-0002">3D-structure</keyword>
<keyword id="KW-0010">Activator</keyword>
<keyword id="KW-0238">DNA-binding</keyword>
<keyword id="KW-1185">Reference proteome</keyword>
<keyword id="KW-0678">Repressor</keyword>
<keyword id="KW-0804">Transcription</keyword>
<keyword id="KW-0805">Transcription regulation</keyword>
<proteinExistence type="evidence at protein level"/>
<reference key="1">
    <citation type="journal article" date="1998" name="Nature">
        <title>Deciphering the biology of Mycobacterium tuberculosis from the complete genome sequence.</title>
        <authorList>
            <person name="Cole S.T."/>
            <person name="Brosch R."/>
            <person name="Parkhill J."/>
            <person name="Garnier T."/>
            <person name="Churcher C.M."/>
            <person name="Harris D.E."/>
            <person name="Gordon S.V."/>
            <person name="Eiglmeier K."/>
            <person name="Gas S."/>
            <person name="Barry C.E. III"/>
            <person name="Tekaia F."/>
            <person name="Badcock K."/>
            <person name="Basham D."/>
            <person name="Brown D."/>
            <person name="Chillingworth T."/>
            <person name="Connor R."/>
            <person name="Davies R.M."/>
            <person name="Devlin K."/>
            <person name="Feltwell T."/>
            <person name="Gentles S."/>
            <person name="Hamlin N."/>
            <person name="Holroyd S."/>
            <person name="Hornsby T."/>
            <person name="Jagels K."/>
            <person name="Krogh A."/>
            <person name="McLean J."/>
            <person name="Moule S."/>
            <person name="Murphy L.D."/>
            <person name="Oliver S."/>
            <person name="Osborne J."/>
            <person name="Quail M.A."/>
            <person name="Rajandream M.A."/>
            <person name="Rogers J."/>
            <person name="Rutter S."/>
            <person name="Seeger K."/>
            <person name="Skelton S."/>
            <person name="Squares S."/>
            <person name="Squares R."/>
            <person name="Sulston J.E."/>
            <person name="Taylor K."/>
            <person name="Whitehead S."/>
            <person name="Barrell B.G."/>
        </authorList>
    </citation>
    <scope>NUCLEOTIDE SEQUENCE [LARGE SCALE GENOMIC DNA]</scope>
    <source>
        <strain>ATCC 25618 / H37Rv</strain>
    </source>
</reference>
<reference key="2">
    <citation type="journal article" date="2011" name="Mol. Cell. Proteomics">
        <title>Proteogenomic analysis of Mycobacterium tuberculosis by high resolution mass spectrometry.</title>
        <authorList>
            <person name="Kelkar D.S."/>
            <person name="Kumar D."/>
            <person name="Kumar P."/>
            <person name="Balakrishnan L."/>
            <person name="Muthusamy B."/>
            <person name="Yadav A.K."/>
            <person name="Shrivastava P."/>
            <person name="Marimuthu A."/>
            <person name="Anand S."/>
            <person name="Sundaram H."/>
            <person name="Kingsbury R."/>
            <person name="Harsha H.C."/>
            <person name="Nair B."/>
            <person name="Prasad T.S."/>
            <person name="Chauhan D.S."/>
            <person name="Katoch K."/>
            <person name="Katoch V.M."/>
            <person name="Kumar P."/>
            <person name="Chaerkady R."/>
            <person name="Ramachandran S."/>
            <person name="Dash D."/>
            <person name="Pandey A."/>
        </authorList>
    </citation>
    <scope>IDENTIFICATION BY MASS SPECTROMETRY [LARGE SCALE ANALYSIS]</scope>
    <source>
        <strain>ATCC 25618 / H37Rv</strain>
    </source>
</reference>
<reference key="3">
    <citation type="journal article" date="2013" name="Clin. Vaccine Immunol.">
        <title>Mycobacterium tuberculosis region of difference (RD) 2 antigen Rv1985c and RD11 antigen Rv3425 have the promising potential to distinguish patients with active tuberculosis from M. bovis BCG-vaccinated individuals.</title>
        <authorList>
            <person name="Wang S."/>
            <person name="Chen J."/>
            <person name="Zhang Y."/>
            <person name="Diao N."/>
            <person name="Zhang S."/>
            <person name="Wu J."/>
            <person name="Lu C."/>
            <person name="Wang F."/>
            <person name="Gao Y."/>
            <person name="Shao L."/>
            <person name="Jin J."/>
            <person name="Weng X."/>
            <person name="Zhang W."/>
        </authorList>
    </citation>
    <scope>BIOTECHNOLOGY</scope>
</reference>
<reference key="4">
    <citation type="journal article" date="2017" name="PLoS ONE">
        <title>The transcriptional regulator LysG (Rv1985c) of Mycobacterium tuberculosis activates lysE (Rv1986) in a lysine-dependent manner.</title>
        <authorList>
            <person name="Schneefeld M."/>
            <person name="Busche T."/>
            <person name="Geffers R."/>
            <person name="Kalinowski J."/>
            <person name="Bange F.C."/>
        </authorList>
    </citation>
    <scope>FUNCTION</scope>
    <scope>INDUCTION</scope>
    <source>
        <strain>ATCC 25618 / H37Rv</strain>
    </source>
</reference>
<reference evidence="8" key="5">
    <citation type="journal article" date="2010" name="J. Mol. Biol.">
        <title>Crystal structure of ArgP from Mycobacterium tuberculosis confirms two distinct conformations of full-length LysR transcriptional regulators and reveals its function in DNA binding and transcriptional regulation.</title>
        <authorList>
            <person name="Zhou X."/>
            <person name="Lou Z."/>
            <person name="Fu S."/>
            <person name="Yang A."/>
            <person name="Shen H."/>
            <person name="Li Z."/>
            <person name="Feng Y."/>
            <person name="Bartlam M."/>
            <person name="Wang H."/>
            <person name="Rao Z."/>
        </authorList>
    </citation>
    <scope>X-RAY CRYSTALLOGRAPHY (2.70 ANGSTROMS)</scope>
    <scope>DNA-BINDING</scope>
    <scope>SUBUNIT</scope>
    <scope>DOMAIN</scope>
    <scope>MUTAGENESIS OF LYS-42; ARG-60 AND LEU-71</scope>
</reference>
<feature type="chain" id="PRO_0000105812" description="HTH-type transcriptional regulator LysG">
    <location>
        <begin position="1"/>
        <end position="303"/>
    </location>
</feature>
<feature type="domain" description="HTH lysR-type" evidence="1">
    <location>
        <begin position="6"/>
        <end position="62"/>
    </location>
</feature>
<feature type="DNA-binding region" description="H-T-H motif" evidence="1">
    <location>
        <begin position="23"/>
        <end position="42"/>
    </location>
</feature>
<feature type="mutagenesis site" description="Leads to dissociation into monomers." evidence="2">
    <original>K</original>
    <variation>E</variation>
    <location>
        <position position="42"/>
    </location>
</feature>
<feature type="mutagenesis site" description="Leads to dissociation into monomers." evidence="2">
    <original>R</original>
    <variation>E</variation>
    <location>
        <position position="60"/>
    </location>
</feature>
<feature type="mutagenesis site" description="Leads to dissociation into monomers." evidence="2">
    <original>L</original>
    <variation>W</variation>
    <location>
        <position position="71"/>
    </location>
</feature>
<feature type="helix" evidence="9">
    <location>
        <begin position="9"/>
        <end position="20"/>
    </location>
</feature>
<feature type="helix" evidence="9">
    <location>
        <begin position="23"/>
        <end position="27"/>
    </location>
</feature>
<feature type="turn" evidence="9">
    <location>
        <begin position="28"/>
        <end position="31"/>
    </location>
</feature>
<feature type="helix" evidence="9">
    <location>
        <begin position="34"/>
        <end position="48"/>
    </location>
</feature>
<feature type="strand" evidence="9">
    <location>
        <begin position="56"/>
        <end position="58"/>
    </location>
</feature>
<feature type="helix" evidence="9">
    <location>
        <begin position="63"/>
        <end position="65"/>
    </location>
</feature>
<feature type="helix" evidence="9">
    <location>
        <begin position="66"/>
        <end position="82"/>
    </location>
</feature>
<feature type="turn" evidence="9">
    <location>
        <begin position="83"/>
        <end position="86"/>
    </location>
</feature>
<feature type="strand" evidence="9">
    <location>
        <begin position="95"/>
        <end position="101"/>
    </location>
</feature>
<feature type="helix" evidence="9">
    <location>
        <begin position="103"/>
        <end position="107"/>
    </location>
</feature>
<feature type="helix" evidence="9">
    <location>
        <begin position="110"/>
        <end position="114"/>
    </location>
</feature>
<feature type="strand" evidence="9">
    <location>
        <begin position="119"/>
        <end position="126"/>
    </location>
</feature>
<feature type="helix" evidence="9">
    <location>
        <begin position="129"/>
        <end position="137"/>
    </location>
</feature>
<feature type="strand" evidence="9">
    <location>
        <begin position="142"/>
        <end position="147"/>
    </location>
</feature>
<feature type="strand" evidence="9">
    <location>
        <begin position="155"/>
        <end position="169"/>
    </location>
</feature>
<feature type="helix" evidence="9">
    <location>
        <begin position="171"/>
        <end position="177"/>
    </location>
</feature>
<feature type="turn" evidence="9">
    <location>
        <begin position="184"/>
        <end position="189"/>
    </location>
</feature>
<feature type="helix" evidence="9">
    <location>
        <begin position="201"/>
        <end position="210"/>
    </location>
</feature>
<feature type="helix" evidence="9">
    <location>
        <begin position="224"/>
        <end position="232"/>
    </location>
</feature>
<feature type="strand" evidence="9">
    <location>
        <begin position="237"/>
        <end position="241"/>
    </location>
</feature>
<feature type="helix" evidence="9">
    <location>
        <begin position="242"/>
        <end position="251"/>
    </location>
</feature>
<feature type="strand" evidence="9">
    <location>
        <begin position="255"/>
        <end position="259"/>
    </location>
</feature>
<feature type="strand" evidence="9">
    <location>
        <begin position="262"/>
        <end position="273"/>
    </location>
</feature>
<feature type="helix" evidence="9">
    <location>
        <begin position="276"/>
        <end position="288"/>
    </location>
</feature>
<feature type="turn" evidence="9">
    <location>
        <begin position="289"/>
        <end position="291"/>
    </location>
</feature>
<name>LYSG_MYCTU</name>
<protein>
    <recommendedName>
        <fullName evidence="7">HTH-type transcriptional regulator LysG</fullName>
    </recommendedName>
</protein>
<comment type="function">
    <text evidence="4">Positively regulates the expression of the exporter LysE and represses its own expression. Activity requires the presence of a coinducer, lysine or histidine. Acts by binding to lysG-lysE promoter region. Also up-regulates the expression of ppsB, ppsC and ppsD, by binding to the upstream region of ppsB.</text>
</comment>
<comment type="subunit">
    <text evidence="2">Homodimer (PubMed:20036253). Two types of dimers are identified from the crystal packing: a DBD-type dimer, where the dimer is mainly stabilized by the coiled-coil linker helices, and a RD-type dimer, where RDs contact each other in an antiparallel, side-by-side alignment (PubMed:20036253).</text>
</comment>
<comment type="induction">
    <text evidence="4">Negatively autoregulated.</text>
</comment>
<comment type="domain">
    <text evidence="2">Contains an N-terminal DNA binding domain (DBD) and a C-terminal regulatory domain (RD).</text>
</comment>
<comment type="biotechnology">
    <text evidence="3">A wide array of epitopes was recognized on Rv1985c in TB patients. Those epitopes could specifically discriminate TB infection from BCG vaccination. These results indicate that the peptide pools selected from Rv1985c have the potential to diagnose TB infection by a method that may be routinely used in clinical laboratories.</text>
</comment>
<comment type="similarity">
    <text evidence="7">Belongs to the LysR transcriptional regulatory family.</text>
</comment>
<evidence type="ECO:0000255" key="1">
    <source>
        <dbReference type="PROSITE-ProRule" id="PRU00253"/>
    </source>
</evidence>
<evidence type="ECO:0000269" key="2">
    <source>
    </source>
</evidence>
<evidence type="ECO:0000269" key="3">
    <source>
    </source>
</evidence>
<evidence type="ECO:0000269" key="4">
    <source>
    </source>
</evidence>
<evidence type="ECO:0000303" key="5">
    <source>
    </source>
</evidence>
<evidence type="ECO:0000303" key="6">
    <source>
    </source>
</evidence>
<evidence type="ECO:0000305" key="7"/>
<evidence type="ECO:0007744" key="8">
    <source>
        <dbReference type="PDB" id="3ISP"/>
    </source>
</evidence>
<evidence type="ECO:0007829" key="9">
    <source>
        <dbReference type="PDB" id="3ISP"/>
    </source>
</evidence>
<dbReference type="EMBL" id="AL123456">
    <property type="protein sequence ID" value="CCP44755.1"/>
    <property type="molecule type" value="Genomic_DNA"/>
</dbReference>
<dbReference type="PIR" id="G70756">
    <property type="entry name" value="G70756"/>
</dbReference>
<dbReference type="RefSeq" id="NP_216501.1">
    <property type="nucleotide sequence ID" value="NC_000962.3"/>
</dbReference>
<dbReference type="RefSeq" id="WP_003409986.1">
    <property type="nucleotide sequence ID" value="NZ_NVQJ01000043.1"/>
</dbReference>
<dbReference type="PDB" id="3ISP">
    <property type="method" value="X-ray"/>
    <property type="resolution" value="2.70 A"/>
    <property type="chains" value="A/B=1-303"/>
</dbReference>
<dbReference type="PDBsum" id="3ISP"/>
<dbReference type="SMR" id="P9WMF5"/>
<dbReference type="FunCoup" id="P9WMF5">
    <property type="interactions" value="1"/>
</dbReference>
<dbReference type="STRING" id="83332.Rv1985c"/>
<dbReference type="PaxDb" id="83332-Rv1985c"/>
<dbReference type="GeneID" id="885818"/>
<dbReference type="KEGG" id="mtu:Rv1985c"/>
<dbReference type="KEGG" id="mtv:RVBD_1985c"/>
<dbReference type="TubercuList" id="Rv1985c"/>
<dbReference type="eggNOG" id="COG0583">
    <property type="taxonomic scope" value="Bacteria"/>
</dbReference>
<dbReference type="InParanoid" id="P9WMF5"/>
<dbReference type="OrthoDB" id="3252676at2"/>
<dbReference type="PhylomeDB" id="P9WMF5"/>
<dbReference type="EvolutionaryTrace" id="P9WMF5"/>
<dbReference type="Proteomes" id="UP000001584">
    <property type="component" value="Chromosome"/>
</dbReference>
<dbReference type="GO" id="GO:0003677">
    <property type="term" value="F:DNA binding"/>
    <property type="evidence" value="ECO:0000314"/>
    <property type="project" value="MTBBASE"/>
</dbReference>
<dbReference type="GO" id="GO:0003688">
    <property type="term" value="F:DNA replication origin binding"/>
    <property type="evidence" value="ECO:0000314"/>
    <property type="project" value="MTBBASE"/>
</dbReference>
<dbReference type="GO" id="GO:0003700">
    <property type="term" value="F:DNA-binding transcription factor activity"/>
    <property type="evidence" value="ECO:0000314"/>
    <property type="project" value="MTBBASE"/>
</dbReference>
<dbReference type="GO" id="GO:0008156">
    <property type="term" value="P:negative regulation of DNA replication"/>
    <property type="evidence" value="ECO:0000314"/>
    <property type="project" value="MTBBASE"/>
</dbReference>
<dbReference type="GO" id="GO:0006355">
    <property type="term" value="P:regulation of DNA-templated transcription"/>
    <property type="evidence" value="ECO:0000314"/>
    <property type="project" value="MTBBASE"/>
</dbReference>
<dbReference type="FunFam" id="1.10.10.10:FF:000456">
    <property type="entry name" value="LysR family transcriptional regulator ArgP"/>
    <property type="match status" value="1"/>
</dbReference>
<dbReference type="Gene3D" id="3.40.190.290">
    <property type="match status" value="1"/>
</dbReference>
<dbReference type="Gene3D" id="1.10.10.10">
    <property type="entry name" value="Winged helix-like DNA-binding domain superfamily/Winged helix DNA-binding domain"/>
    <property type="match status" value="1"/>
</dbReference>
<dbReference type="InterPro" id="IPR017685">
    <property type="entry name" value="ArgP"/>
</dbReference>
<dbReference type="InterPro" id="IPR050176">
    <property type="entry name" value="LTTR"/>
</dbReference>
<dbReference type="InterPro" id="IPR005119">
    <property type="entry name" value="LysR_subst-bd"/>
</dbReference>
<dbReference type="InterPro" id="IPR000847">
    <property type="entry name" value="Tscrpt_reg_HTH_LysR"/>
</dbReference>
<dbReference type="InterPro" id="IPR036388">
    <property type="entry name" value="WH-like_DNA-bd_sf"/>
</dbReference>
<dbReference type="InterPro" id="IPR036390">
    <property type="entry name" value="WH_DNA-bd_sf"/>
</dbReference>
<dbReference type="NCBIfam" id="TIGR03298">
    <property type="entry name" value="argP"/>
    <property type="match status" value="1"/>
</dbReference>
<dbReference type="NCBIfam" id="NF002964">
    <property type="entry name" value="PRK03635.1"/>
    <property type="match status" value="1"/>
</dbReference>
<dbReference type="NCBIfam" id="NF009888">
    <property type="entry name" value="PRK13348.1"/>
    <property type="match status" value="1"/>
</dbReference>
<dbReference type="PANTHER" id="PTHR30579:SF2">
    <property type="entry name" value="HTH-TYPE TRANSCRIPTIONAL REGULATOR ARGP"/>
    <property type="match status" value="1"/>
</dbReference>
<dbReference type="PANTHER" id="PTHR30579">
    <property type="entry name" value="TRANSCRIPTIONAL REGULATOR"/>
    <property type="match status" value="1"/>
</dbReference>
<dbReference type="Pfam" id="PF00126">
    <property type="entry name" value="HTH_1"/>
    <property type="match status" value="1"/>
</dbReference>
<dbReference type="Pfam" id="PF03466">
    <property type="entry name" value="LysR_substrate"/>
    <property type="match status" value="1"/>
</dbReference>
<dbReference type="PRINTS" id="PR00039">
    <property type="entry name" value="HTHLYSR"/>
</dbReference>
<dbReference type="SUPFAM" id="SSF53850">
    <property type="entry name" value="Periplasmic binding protein-like II"/>
    <property type="match status" value="1"/>
</dbReference>
<dbReference type="SUPFAM" id="SSF46785">
    <property type="entry name" value="Winged helix' DNA-binding domain"/>
    <property type="match status" value="1"/>
</dbReference>
<dbReference type="PROSITE" id="PS50931">
    <property type="entry name" value="HTH_LYSR"/>
    <property type="match status" value="1"/>
</dbReference>